<keyword id="KW-0342">GTP-binding</keyword>
<keyword id="KW-0547">Nucleotide-binding</keyword>
<keyword id="KW-1185">Reference proteome</keyword>
<feature type="chain" id="PRO_0000284147" description="ADP-ribosylation factor-like protein 13A">
    <location>
        <begin position="1"/>
        <end position="395"/>
    </location>
</feature>
<feature type="binding site" evidence="1">
    <location>
        <begin position="28"/>
        <end position="35"/>
    </location>
    <ligand>
        <name>GTP</name>
        <dbReference type="ChEBI" id="CHEBI:37565"/>
    </ligand>
</feature>
<feature type="binding site" evidence="1">
    <location>
        <begin position="71"/>
        <end position="75"/>
    </location>
    <ligand>
        <name>GTP</name>
        <dbReference type="ChEBI" id="CHEBI:37565"/>
    </ligand>
</feature>
<feature type="binding site" evidence="1">
    <location>
        <begin position="130"/>
        <end position="133"/>
    </location>
    <ligand>
        <name>GTP</name>
        <dbReference type="ChEBI" id="CHEBI:37565"/>
    </ligand>
</feature>
<reference key="1">
    <citation type="journal article" date="2004" name="Genome Res.">
        <title>The status, quality, and expansion of the NIH full-length cDNA project: the Mammalian Gene Collection (MGC).</title>
        <authorList>
            <consortium name="The MGC Project Team"/>
        </authorList>
    </citation>
    <scope>NUCLEOTIDE SEQUENCE [LARGE SCALE MRNA]</scope>
    <source>
        <tissue>Testis</tissue>
    </source>
</reference>
<protein>
    <recommendedName>
        <fullName>ADP-ribosylation factor-like protein 13A</fullName>
    </recommendedName>
</protein>
<sequence length="395" mass="45467">MFRLLTACWSRQKATEGKQRNVTIIVIGLDNSGKSHLVAAFQRLIPSKMHSEMRPTQTTLLLDDYQVSVYDLTGDLKGREKWPNYYAEAHGLVFVVDSSDIARIQEVKIILTRLMFDKRVSGKPILILANKQDKKDALLPCDIIEYLLLERLVNETKSMCRVEPCSTIRNLPKRHQQPIVIGLRWLLAAIGDRYDELCTRHQTPSMSNISSSKNIRGCGERCSSDSLSTRGVGVVRNNHRQHFEKRQHLEHRQHVEQRHFEKRQHFESRQHLIQRSLDARPLKPILQKDGFRIRPKKNMSVTFALDVIMEEGECSRKIGAPNISKPCNSQCYDTKTPAPSADANLFKARRPKKRIETWDTEEMFLEDPRGEAFRSCVTGHSSRSSRNTQSLYFTG</sequence>
<dbReference type="EMBL" id="BC079325">
    <property type="protein sequence ID" value="AAH79325.1"/>
    <property type="molecule type" value="mRNA"/>
</dbReference>
<dbReference type="RefSeq" id="NP_001019537.1">
    <property type="nucleotide sequence ID" value="NM_001024366.1"/>
</dbReference>
<dbReference type="RefSeq" id="XP_038955907.1">
    <property type="nucleotide sequence ID" value="XM_039099979.2"/>
</dbReference>
<dbReference type="SMR" id="Q6AXT3"/>
<dbReference type="FunCoup" id="Q6AXT3">
    <property type="interactions" value="11"/>
</dbReference>
<dbReference type="STRING" id="10116.ENSRNOP00000069009"/>
<dbReference type="PhosphoSitePlus" id="Q6AXT3"/>
<dbReference type="PaxDb" id="10116-ENSRNOP00000030412"/>
<dbReference type="GeneID" id="501617"/>
<dbReference type="KEGG" id="rno:501617"/>
<dbReference type="UCSC" id="RGD:1562947">
    <property type="organism name" value="rat"/>
</dbReference>
<dbReference type="AGR" id="RGD:1562947"/>
<dbReference type="CTD" id="392509"/>
<dbReference type="RGD" id="1562947">
    <property type="gene designation" value="Arl13a"/>
</dbReference>
<dbReference type="VEuPathDB" id="HostDB:ENSRNOG00000055454"/>
<dbReference type="eggNOG" id="KOG0073">
    <property type="taxonomic scope" value="Eukaryota"/>
</dbReference>
<dbReference type="HOGENOM" id="CLU_040729_3_1_1"/>
<dbReference type="InParanoid" id="Q6AXT3"/>
<dbReference type="OrthoDB" id="14717at2759"/>
<dbReference type="PhylomeDB" id="Q6AXT3"/>
<dbReference type="TreeFam" id="TF105476"/>
<dbReference type="PRO" id="PR:Q6AXT3"/>
<dbReference type="Proteomes" id="UP000002494">
    <property type="component" value="Chromosome X"/>
</dbReference>
<dbReference type="Bgee" id="ENSRNOG00000055454">
    <property type="expression patterns" value="Expressed in testis and 5 other cell types or tissues"/>
</dbReference>
<dbReference type="GO" id="GO:0060170">
    <property type="term" value="C:ciliary membrane"/>
    <property type="evidence" value="ECO:0000318"/>
    <property type="project" value="GO_Central"/>
</dbReference>
<dbReference type="GO" id="GO:0031514">
    <property type="term" value="C:motile cilium"/>
    <property type="evidence" value="ECO:0000318"/>
    <property type="project" value="GO_Central"/>
</dbReference>
<dbReference type="GO" id="GO:0097730">
    <property type="term" value="C:non-motile cilium"/>
    <property type="evidence" value="ECO:0000318"/>
    <property type="project" value="GO_Central"/>
</dbReference>
<dbReference type="GO" id="GO:0005525">
    <property type="term" value="F:GTP binding"/>
    <property type="evidence" value="ECO:0007669"/>
    <property type="project" value="UniProtKB-KW"/>
</dbReference>
<dbReference type="GO" id="GO:0003924">
    <property type="term" value="F:GTPase activity"/>
    <property type="evidence" value="ECO:0007669"/>
    <property type="project" value="InterPro"/>
</dbReference>
<dbReference type="GO" id="GO:1905515">
    <property type="term" value="P:non-motile cilium assembly"/>
    <property type="evidence" value="ECO:0000318"/>
    <property type="project" value="GO_Central"/>
</dbReference>
<dbReference type="GO" id="GO:0097500">
    <property type="term" value="P:receptor localization to non-motile cilium"/>
    <property type="evidence" value="ECO:0000318"/>
    <property type="project" value="GO_Central"/>
</dbReference>
<dbReference type="CDD" id="cd04161">
    <property type="entry name" value="Arl2l1_Arl13_like"/>
    <property type="match status" value="1"/>
</dbReference>
<dbReference type="FunFam" id="3.40.50.300:FF:000415">
    <property type="entry name" value="ADP-ribosylation factor-like GTPase 13B"/>
    <property type="match status" value="1"/>
</dbReference>
<dbReference type="Gene3D" id="3.40.50.300">
    <property type="entry name" value="P-loop containing nucleotide triphosphate hydrolases"/>
    <property type="match status" value="1"/>
</dbReference>
<dbReference type="InterPro" id="IPR051995">
    <property type="entry name" value="Ciliary_GTPase"/>
</dbReference>
<dbReference type="InterPro" id="IPR027417">
    <property type="entry name" value="P-loop_NTPase"/>
</dbReference>
<dbReference type="InterPro" id="IPR006689">
    <property type="entry name" value="Small_GTPase_ARF/SAR"/>
</dbReference>
<dbReference type="PANTHER" id="PTHR46090:SF1">
    <property type="entry name" value="ADP-RIBOSYLATION FACTOR-LIKE PROTEIN 13A"/>
    <property type="match status" value="1"/>
</dbReference>
<dbReference type="PANTHER" id="PTHR46090">
    <property type="entry name" value="ADP-RIBOSYLATION FACTOR-LIKE PROTEIN 13B"/>
    <property type="match status" value="1"/>
</dbReference>
<dbReference type="Pfam" id="PF00025">
    <property type="entry name" value="Arf"/>
    <property type="match status" value="1"/>
</dbReference>
<dbReference type="PRINTS" id="PR00328">
    <property type="entry name" value="SAR1GTPBP"/>
</dbReference>
<dbReference type="SMART" id="SM00177">
    <property type="entry name" value="ARF"/>
    <property type="match status" value="1"/>
</dbReference>
<dbReference type="SMART" id="SM00178">
    <property type="entry name" value="SAR"/>
    <property type="match status" value="1"/>
</dbReference>
<dbReference type="SUPFAM" id="SSF52540">
    <property type="entry name" value="P-loop containing nucleoside triphosphate hydrolases"/>
    <property type="match status" value="1"/>
</dbReference>
<dbReference type="PROSITE" id="PS51417">
    <property type="entry name" value="ARF"/>
    <property type="match status" value="1"/>
</dbReference>
<proteinExistence type="evidence at transcript level"/>
<accession>Q6AXT3</accession>
<organism>
    <name type="scientific">Rattus norvegicus</name>
    <name type="common">Rat</name>
    <dbReference type="NCBI Taxonomy" id="10116"/>
    <lineage>
        <taxon>Eukaryota</taxon>
        <taxon>Metazoa</taxon>
        <taxon>Chordata</taxon>
        <taxon>Craniata</taxon>
        <taxon>Vertebrata</taxon>
        <taxon>Euteleostomi</taxon>
        <taxon>Mammalia</taxon>
        <taxon>Eutheria</taxon>
        <taxon>Euarchontoglires</taxon>
        <taxon>Glires</taxon>
        <taxon>Rodentia</taxon>
        <taxon>Myomorpha</taxon>
        <taxon>Muroidea</taxon>
        <taxon>Muridae</taxon>
        <taxon>Murinae</taxon>
        <taxon>Rattus</taxon>
    </lineage>
</organism>
<evidence type="ECO:0000250" key="1"/>
<evidence type="ECO:0000305" key="2"/>
<comment type="similarity">
    <text evidence="2">Belongs to the small GTPase superfamily. Arf family.</text>
</comment>
<gene>
    <name type="primary">Arl13a</name>
</gene>
<name>AR13A_RAT</name>